<keyword id="KW-0489">Methyltransferase</keyword>
<keyword id="KW-1185">Reference proteome</keyword>
<keyword id="KW-0949">S-adenosyl-L-methionine</keyword>
<keyword id="KW-0808">Transferase</keyword>
<name>SETD9_PONAB</name>
<protein>
    <recommendedName>
        <fullName>SET domain-containing protein 9</fullName>
        <ecNumber>2.1.1.-</ecNumber>
    </recommendedName>
</protein>
<reference key="1">
    <citation type="submission" date="2004-11" db="EMBL/GenBank/DDBJ databases">
        <authorList>
            <consortium name="The German cDNA consortium"/>
        </authorList>
    </citation>
    <scope>NUCLEOTIDE SEQUENCE [LARGE SCALE MRNA]</scope>
    <source>
        <tissue>Heart</tissue>
    </source>
</reference>
<comment type="similarity">
    <text evidence="1">Belongs to the class V-like SAM-binding methyltransferase superfamily.</text>
</comment>
<feature type="chain" id="PRO_0000300497" description="SET domain-containing protein 9">
    <location>
        <begin position="1"/>
        <end position="273"/>
    </location>
</feature>
<feature type="domain" description="SET" evidence="1">
    <location>
        <begin position="96"/>
        <end position="269"/>
    </location>
</feature>
<feature type="binding site" evidence="1">
    <location>
        <position position="268"/>
    </location>
    <ligand>
        <name>S-adenosyl-L-methionine</name>
        <dbReference type="ChEBI" id="CHEBI:59789"/>
    </ligand>
</feature>
<evidence type="ECO:0000255" key="1">
    <source>
        <dbReference type="PROSITE-ProRule" id="PRU00190"/>
    </source>
</evidence>
<gene>
    <name type="primary">SETD9</name>
</gene>
<proteinExistence type="evidence at transcript level"/>
<dbReference type="EC" id="2.1.1.-"/>
<dbReference type="EMBL" id="CR858523">
    <property type="protein sequence ID" value="CAH90750.1"/>
    <property type="molecule type" value="mRNA"/>
</dbReference>
<dbReference type="RefSeq" id="NP_001125419.1">
    <property type="nucleotide sequence ID" value="NM_001131947.1"/>
</dbReference>
<dbReference type="Ensembl" id="ENSPPYT00000034988.1">
    <property type="protein sequence ID" value="ENSPPYP00000028524.1"/>
    <property type="gene ID" value="ENSPPYG00000015479.3"/>
</dbReference>
<dbReference type="GeneID" id="100172326"/>
<dbReference type="KEGG" id="pon:100172326"/>
<dbReference type="CTD" id="133383"/>
<dbReference type="eggNOG" id="ENOG502QVIC">
    <property type="taxonomic scope" value="Eukaryota"/>
</dbReference>
<dbReference type="GeneTree" id="ENSGT00390000001437"/>
<dbReference type="InParanoid" id="Q5RBW0"/>
<dbReference type="OrthoDB" id="442460at2759"/>
<dbReference type="Proteomes" id="UP000001595">
    <property type="component" value="Chromosome 5"/>
</dbReference>
<dbReference type="GO" id="GO:0008168">
    <property type="term" value="F:methyltransferase activity"/>
    <property type="evidence" value="ECO:0007669"/>
    <property type="project" value="UniProtKB-KW"/>
</dbReference>
<dbReference type="GO" id="GO:0032259">
    <property type="term" value="P:methylation"/>
    <property type="evidence" value="ECO:0007669"/>
    <property type="project" value="UniProtKB-KW"/>
</dbReference>
<dbReference type="CDD" id="cd10537">
    <property type="entry name" value="SET_SETD9"/>
    <property type="match status" value="1"/>
</dbReference>
<dbReference type="Gene3D" id="2.170.270.10">
    <property type="entry name" value="SET domain"/>
    <property type="match status" value="1"/>
</dbReference>
<dbReference type="InterPro" id="IPR001214">
    <property type="entry name" value="SET_dom"/>
</dbReference>
<dbReference type="InterPro" id="IPR046341">
    <property type="entry name" value="SET_dom_sf"/>
</dbReference>
<dbReference type="InterPro" id="IPR040415">
    <property type="entry name" value="SETD9"/>
</dbReference>
<dbReference type="PANTHER" id="PTHR33524">
    <property type="entry name" value="C5ORF35"/>
    <property type="match status" value="1"/>
</dbReference>
<dbReference type="PANTHER" id="PTHR33524:SF2">
    <property type="entry name" value="SET DOMAIN-CONTAINING PROTEIN 9"/>
    <property type="match status" value="1"/>
</dbReference>
<dbReference type="SUPFAM" id="SSF82199">
    <property type="entry name" value="SET domain"/>
    <property type="match status" value="1"/>
</dbReference>
<dbReference type="PROSITE" id="PS50280">
    <property type="entry name" value="SET"/>
    <property type="match status" value="1"/>
</dbReference>
<accession>Q5RBW0</accession>
<sequence length="273" mass="30548">MVGFGLGTLRYVPEESKDKVTSDEDVLGTLLKVFQALFLNDFNKQSEILTMLPESVKSKYQDLLAVEHQGVKLLENRHQQQSTFKPEEILYKTLGFSVAQATSSLISAGKGVFVTKGLVPKGAVVSMYPGTVYQKYEPIFFQSIGNPFIFRCLDGVLIDGNDKGISKVVYRSCNGRDRLGPLKMSDSTWLTSEIHNPLAVGQYVNNCSNDRAANVCYQEFDVPAVFPIELKQYLPNIAYSYDKHSPLRCVVLVALRDINQGEELFSNYYTIVS</sequence>
<organism>
    <name type="scientific">Pongo abelii</name>
    <name type="common">Sumatran orangutan</name>
    <name type="synonym">Pongo pygmaeus abelii</name>
    <dbReference type="NCBI Taxonomy" id="9601"/>
    <lineage>
        <taxon>Eukaryota</taxon>
        <taxon>Metazoa</taxon>
        <taxon>Chordata</taxon>
        <taxon>Craniata</taxon>
        <taxon>Vertebrata</taxon>
        <taxon>Euteleostomi</taxon>
        <taxon>Mammalia</taxon>
        <taxon>Eutheria</taxon>
        <taxon>Euarchontoglires</taxon>
        <taxon>Primates</taxon>
        <taxon>Haplorrhini</taxon>
        <taxon>Catarrhini</taxon>
        <taxon>Hominidae</taxon>
        <taxon>Pongo</taxon>
    </lineage>
</organism>